<sequence>MAKQKIRIRLKAYDHRLLDASAKKIVEAVKMTNAKVSGPIPLPTERTLYTVLTSPHKYKDAREQFEKLVHKRLIEIIDPTPKTIDSLMKVDLPAGVDVEIKL</sequence>
<comment type="function">
    <text evidence="1">Involved in the binding of tRNA to the ribosomes.</text>
</comment>
<comment type="subunit">
    <text evidence="1">Part of the 30S ribosomal subunit.</text>
</comment>
<comment type="similarity">
    <text evidence="1">Belongs to the universal ribosomal protein uS10 family.</text>
</comment>
<name>RS10_KOSOT</name>
<reference key="1">
    <citation type="submission" date="2009-06" db="EMBL/GenBank/DDBJ databases">
        <title>Complete sequence of Thermotogales bacterium TBF 19.5.1.</title>
        <authorList>
            <consortium name="US DOE Joint Genome Institute"/>
            <person name="Lucas S."/>
            <person name="Copeland A."/>
            <person name="Lapidus A."/>
            <person name="Glavina del Rio T."/>
            <person name="Tice H."/>
            <person name="Bruce D."/>
            <person name="Goodwin L."/>
            <person name="Pitluck S."/>
            <person name="Chertkov O."/>
            <person name="Brettin T."/>
            <person name="Detter J.C."/>
            <person name="Han C."/>
            <person name="Schmutz J."/>
            <person name="Larimer F."/>
            <person name="Land M."/>
            <person name="Hauser L."/>
            <person name="Kyrpides N."/>
            <person name="Ovchinnikova G."/>
            <person name="Noll K."/>
        </authorList>
    </citation>
    <scope>NUCLEOTIDE SEQUENCE [LARGE SCALE GENOMIC DNA]</scope>
    <source>
        <strain>ATCC BAA-1733 / DSM 21960 / TBF 19.5.1</strain>
    </source>
</reference>
<keyword id="KW-1185">Reference proteome</keyword>
<keyword id="KW-0687">Ribonucleoprotein</keyword>
<keyword id="KW-0689">Ribosomal protein</keyword>
<gene>
    <name evidence="1" type="primary">rpsJ</name>
    <name type="ordered locus">Kole_1903</name>
</gene>
<dbReference type="EMBL" id="CP001634">
    <property type="protein sequence ID" value="ACR80584.1"/>
    <property type="molecule type" value="Genomic_DNA"/>
</dbReference>
<dbReference type="RefSeq" id="WP_015869227.1">
    <property type="nucleotide sequence ID" value="NC_012785.1"/>
</dbReference>
<dbReference type="SMR" id="C5CGR5"/>
<dbReference type="STRING" id="521045.Kole_1903"/>
<dbReference type="KEGG" id="kol:Kole_1903"/>
<dbReference type="eggNOG" id="COG0051">
    <property type="taxonomic scope" value="Bacteria"/>
</dbReference>
<dbReference type="HOGENOM" id="CLU_122625_1_3_0"/>
<dbReference type="OrthoDB" id="9804464at2"/>
<dbReference type="Proteomes" id="UP000002382">
    <property type="component" value="Chromosome"/>
</dbReference>
<dbReference type="GO" id="GO:1990904">
    <property type="term" value="C:ribonucleoprotein complex"/>
    <property type="evidence" value="ECO:0007669"/>
    <property type="project" value="UniProtKB-KW"/>
</dbReference>
<dbReference type="GO" id="GO:0005840">
    <property type="term" value="C:ribosome"/>
    <property type="evidence" value="ECO:0007669"/>
    <property type="project" value="UniProtKB-KW"/>
</dbReference>
<dbReference type="GO" id="GO:0003735">
    <property type="term" value="F:structural constituent of ribosome"/>
    <property type="evidence" value="ECO:0007669"/>
    <property type="project" value="InterPro"/>
</dbReference>
<dbReference type="GO" id="GO:0000049">
    <property type="term" value="F:tRNA binding"/>
    <property type="evidence" value="ECO:0007669"/>
    <property type="project" value="UniProtKB-UniRule"/>
</dbReference>
<dbReference type="GO" id="GO:0006412">
    <property type="term" value="P:translation"/>
    <property type="evidence" value="ECO:0007669"/>
    <property type="project" value="UniProtKB-UniRule"/>
</dbReference>
<dbReference type="FunFam" id="3.30.70.600:FF:000001">
    <property type="entry name" value="30S ribosomal protein S10"/>
    <property type="match status" value="1"/>
</dbReference>
<dbReference type="Gene3D" id="3.30.70.600">
    <property type="entry name" value="Ribosomal protein S10 domain"/>
    <property type="match status" value="1"/>
</dbReference>
<dbReference type="HAMAP" id="MF_00508">
    <property type="entry name" value="Ribosomal_uS10"/>
    <property type="match status" value="1"/>
</dbReference>
<dbReference type="InterPro" id="IPR001848">
    <property type="entry name" value="Ribosomal_uS10"/>
</dbReference>
<dbReference type="InterPro" id="IPR018268">
    <property type="entry name" value="Ribosomal_uS10_CS"/>
</dbReference>
<dbReference type="InterPro" id="IPR027486">
    <property type="entry name" value="Ribosomal_uS10_dom"/>
</dbReference>
<dbReference type="InterPro" id="IPR036838">
    <property type="entry name" value="Ribosomal_uS10_dom_sf"/>
</dbReference>
<dbReference type="NCBIfam" id="NF001861">
    <property type="entry name" value="PRK00596.1"/>
    <property type="match status" value="1"/>
</dbReference>
<dbReference type="NCBIfam" id="TIGR01049">
    <property type="entry name" value="rpsJ_bact"/>
    <property type="match status" value="1"/>
</dbReference>
<dbReference type="PANTHER" id="PTHR11700">
    <property type="entry name" value="30S RIBOSOMAL PROTEIN S10 FAMILY MEMBER"/>
    <property type="match status" value="1"/>
</dbReference>
<dbReference type="Pfam" id="PF00338">
    <property type="entry name" value="Ribosomal_S10"/>
    <property type="match status" value="1"/>
</dbReference>
<dbReference type="PRINTS" id="PR00971">
    <property type="entry name" value="RIBOSOMALS10"/>
</dbReference>
<dbReference type="SMART" id="SM01403">
    <property type="entry name" value="Ribosomal_S10"/>
    <property type="match status" value="1"/>
</dbReference>
<dbReference type="SUPFAM" id="SSF54999">
    <property type="entry name" value="Ribosomal protein S10"/>
    <property type="match status" value="1"/>
</dbReference>
<dbReference type="PROSITE" id="PS00361">
    <property type="entry name" value="RIBOSOMAL_S10"/>
    <property type="match status" value="1"/>
</dbReference>
<accession>C5CGR5</accession>
<protein>
    <recommendedName>
        <fullName evidence="1">Small ribosomal subunit protein uS10</fullName>
    </recommendedName>
    <alternativeName>
        <fullName evidence="2">30S ribosomal protein S10</fullName>
    </alternativeName>
</protein>
<organism>
    <name type="scientific">Kosmotoga olearia (strain ATCC BAA-1733 / DSM 21960 / TBF 19.5.1)</name>
    <dbReference type="NCBI Taxonomy" id="521045"/>
    <lineage>
        <taxon>Bacteria</taxon>
        <taxon>Thermotogati</taxon>
        <taxon>Thermotogota</taxon>
        <taxon>Thermotogae</taxon>
        <taxon>Kosmotogales</taxon>
        <taxon>Kosmotogaceae</taxon>
        <taxon>Kosmotoga</taxon>
    </lineage>
</organism>
<feature type="chain" id="PRO_1000206589" description="Small ribosomal subunit protein uS10">
    <location>
        <begin position="1"/>
        <end position="102"/>
    </location>
</feature>
<evidence type="ECO:0000255" key="1">
    <source>
        <dbReference type="HAMAP-Rule" id="MF_00508"/>
    </source>
</evidence>
<evidence type="ECO:0000305" key="2"/>
<proteinExistence type="inferred from homology"/>